<name>RS8_CLOPS</name>
<dbReference type="EMBL" id="CP000312">
    <property type="protein sequence ID" value="ABG87347.1"/>
    <property type="molecule type" value="Genomic_DNA"/>
</dbReference>
<dbReference type="RefSeq" id="WP_003454446.1">
    <property type="nucleotide sequence ID" value="NZ_CAXVKH010000004.1"/>
</dbReference>
<dbReference type="SMR" id="Q0SQF8"/>
<dbReference type="GeneID" id="93001023"/>
<dbReference type="KEGG" id="cpr:CPR_2385"/>
<dbReference type="Proteomes" id="UP000001824">
    <property type="component" value="Chromosome"/>
</dbReference>
<dbReference type="GO" id="GO:1990904">
    <property type="term" value="C:ribonucleoprotein complex"/>
    <property type="evidence" value="ECO:0007669"/>
    <property type="project" value="UniProtKB-KW"/>
</dbReference>
<dbReference type="GO" id="GO:0005840">
    <property type="term" value="C:ribosome"/>
    <property type="evidence" value="ECO:0007669"/>
    <property type="project" value="UniProtKB-KW"/>
</dbReference>
<dbReference type="GO" id="GO:0019843">
    <property type="term" value="F:rRNA binding"/>
    <property type="evidence" value="ECO:0007669"/>
    <property type="project" value="UniProtKB-UniRule"/>
</dbReference>
<dbReference type="GO" id="GO:0003735">
    <property type="term" value="F:structural constituent of ribosome"/>
    <property type="evidence" value="ECO:0007669"/>
    <property type="project" value="InterPro"/>
</dbReference>
<dbReference type="GO" id="GO:0006412">
    <property type="term" value="P:translation"/>
    <property type="evidence" value="ECO:0007669"/>
    <property type="project" value="UniProtKB-UniRule"/>
</dbReference>
<dbReference type="FunFam" id="3.30.1370.30:FF:000002">
    <property type="entry name" value="30S ribosomal protein S8"/>
    <property type="match status" value="1"/>
</dbReference>
<dbReference type="FunFam" id="3.30.1490.10:FF:000001">
    <property type="entry name" value="30S ribosomal protein S8"/>
    <property type="match status" value="1"/>
</dbReference>
<dbReference type="Gene3D" id="3.30.1370.30">
    <property type="match status" value="1"/>
</dbReference>
<dbReference type="Gene3D" id="3.30.1490.10">
    <property type="match status" value="1"/>
</dbReference>
<dbReference type="HAMAP" id="MF_01302_B">
    <property type="entry name" value="Ribosomal_uS8_B"/>
    <property type="match status" value="1"/>
</dbReference>
<dbReference type="InterPro" id="IPR000630">
    <property type="entry name" value="Ribosomal_uS8"/>
</dbReference>
<dbReference type="InterPro" id="IPR047863">
    <property type="entry name" value="Ribosomal_uS8_CS"/>
</dbReference>
<dbReference type="InterPro" id="IPR035987">
    <property type="entry name" value="Ribosomal_uS8_sf"/>
</dbReference>
<dbReference type="NCBIfam" id="NF001109">
    <property type="entry name" value="PRK00136.1"/>
    <property type="match status" value="1"/>
</dbReference>
<dbReference type="PANTHER" id="PTHR11758">
    <property type="entry name" value="40S RIBOSOMAL PROTEIN S15A"/>
    <property type="match status" value="1"/>
</dbReference>
<dbReference type="Pfam" id="PF00410">
    <property type="entry name" value="Ribosomal_S8"/>
    <property type="match status" value="1"/>
</dbReference>
<dbReference type="SUPFAM" id="SSF56047">
    <property type="entry name" value="Ribosomal protein S8"/>
    <property type="match status" value="1"/>
</dbReference>
<dbReference type="PROSITE" id="PS00053">
    <property type="entry name" value="RIBOSOMAL_S8"/>
    <property type="match status" value="1"/>
</dbReference>
<comment type="function">
    <text evidence="1">One of the primary rRNA binding proteins, it binds directly to 16S rRNA central domain where it helps coordinate assembly of the platform of the 30S subunit.</text>
</comment>
<comment type="subunit">
    <text evidence="1">Part of the 30S ribosomal subunit. Contacts proteins S5 and S12.</text>
</comment>
<comment type="similarity">
    <text evidence="1">Belongs to the universal ribosomal protein uS8 family.</text>
</comment>
<protein>
    <recommendedName>
        <fullName evidence="1">Small ribosomal subunit protein uS8</fullName>
    </recommendedName>
    <alternativeName>
        <fullName evidence="2">30S ribosomal protein S8</fullName>
    </alternativeName>
</protein>
<keyword id="KW-0687">Ribonucleoprotein</keyword>
<keyword id="KW-0689">Ribosomal protein</keyword>
<keyword id="KW-0694">RNA-binding</keyword>
<keyword id="KW-0699">rRNA-binding</keyword>
<accession>Q0SQF8</accession>
<gene>
    <name evidence="1" type="primary">rpsH</name>
    <name type="ordered locus">CPR_2385</name>
</gene>
<organism>
    <name type="scientific">Clostridium perfringens (strain SM101 / Type A)</name>
    <dbReference type="NCBI Taxonomy" id="289380"/>
    <lineage>
        <taxon>Bacteria</taxon>
        <taxon>Bacillati</taxon>
        <taxon>Bacillota</taxon>
        <taxon>Clostridia</taxon>
        <taxon>Eubacteriales</taxon>
        <taxon>Clostridiaceae</taxon>
        <taxon>Clostridium</taxon>
    </lineage>
</organism>
<evidence type="ECO:0000255" key="1">
    <source>
        <dbReference type="HAMAP-Rule" id="MF_01302"/>
    </source>
</evidence>
<evidence type="ECO:0000305" key="2"/>
<proteinExistence type="inferred from homology"/>
<sequence length="132" mass="14594">MVMTDPIADLLTRVRNANSVRHEVVEVPSSSVKKAIVNILLQEGYLKGVEEYNDGVVPMMRLTLKYGANNERVITGLKRISKPGLRVYCKKDEVPRVLNGLGIALISTSKGLVVDREARKLGLGGEVICYVW</sequence>
<feature type="chain" id="PRO_0000290824" description="Small ribosomal subunit protein uS8">
    <location>
        <begin position="1"/>
        <end position="132"/>
    </location>
</feature>
<reference key="1">
    <citation type="journal article" date="2006" name="Genome Res.">
        <title>Skewed genomic variability in strains of the toxigenic bacterial pathogen, Clostridium perfringens.</title>
        <authorList>
            <person name="Myers G.S.A."/>
            <person name="Rasko D.A."/>
            <person name="Cheung J.K."/>
            <person name="Ravel J."/>
            <person name="Seshadri R."/>
            <person name="DeBoy R.T."/>
            <person name="Ren Q."/>
            <person name="Varga J."/>
            <person name="Awad M.M."/>
            <person name="Brinkac L.M."/>
            <person name="Daugherty S.C."/>
            <person name="Haft D.H."/>
            <person name="Dodson R.J."/>
            <person name="Madupu R."/>
            <person name="Nelson W.C."/>
            <person name="Rosovitz M.J."/>
            <person name="Sullivan S.A."/>
            <person name="Khouri H."/>
            <person name="Dimitrov G.I."/>
            <person name="Watkins K.L."/>
            <person name="Mulligan S."/>
            <person name="Benton J."/>
            <person name="Radune D."/>
            <person name="Fisher D.J."/>
            <person name="Atkins H.S."/>
            <person name="Hiscox T."/>
            <person name="Jost B.H."/>
            <person name="Billington S.J."/>
            <person name="Songer J.G."/>
            <person name="McClane B.A."/>
            <person name="Titball R.W."/>
            <person name="Rood J.I."/>
            <person name="Melville S.B."/>
            <person name="Paulsen I.T."/>
        </authorList>
    </citation>
    <scope>NUCLEOTIDE SEQUENCE [LARGE SCALE GENOMIC DNA]</scope>
    <source>
        <strain>SM101 / Type A</strain>
    </source>
</reference>